<sequence>MCGIVGAVAQRDVAEILVEGLRRLEYRGYDSAGVAIVDAEANLTRIRRLGKVQELADAVDEAKVVGGTGIAHTRWATHGEPSEINAHPHMSGDITVVHNGIIENHEELRELLQSRGYVFESQTDTEVIAHMVEWELRTAESLLEAVQKTAKQLEGAYGTVAMDRKDPSRIVVARSGSPIVIGFGVGENFLASDQLALLNVTRRFMYLEEGDVAEITRRDVTVFDVTGERVEREITESNAEHDAGDKGQYRHFMQKEIYEQPKALINTMEGRITADSVVTDAIGVHAADILSKVEHVQIVACGTSYNAGMTARYWFEDIAGVSCDVEIASEFRYRKFVTRPNSLLITLSQSGETADTLAALRLAKEKGYMAAMTICNVAGSSLVRESDFAFMTRAGVEIGVASTKAFTTQLSALLMLVTALGKEQGRISKEKEKEIVEALHALPKQINAALSFEKEIEALATDFADKHHTLFLGRGEFYPIAMEASLKLKEISYIHAEAYAAGELKHGPLALIDADMPVVVVAPSNDLLEKLKSNVEEVRARGGLLYVFADADAGFEGDETMKIITMPHVSEITAAIYYTIPMQLLSYYVALIKGTDVDQPRNLAKAVTVE</sequence>
<name>GLMS_VIBPA</name>
<accession>Q87SR3</accession>
<keyword id="KW-0032">Aminotransferase</keyword>
<keyword id="KW-0963">Cytoplasm</keyword>
<keyword id="KW-0315">Glutamine amidotransferase</keyword>
<keyword id="KW-0677">Repeat</keyword>
<keyword id="KW-0808">Transferase</keyword>
<evidence type="ECO:0000255" key="1">
    <source>
        <dbReference type="HAMAP-Rule" id="MF_00164"/>
    </source>
</evidence>
<dbReference type="EC" id="2.6.1.16" evidence="1"/>
<dbReference type="EMBL" id="BA000031">
    <property type="protein sequence ID" value="BAC58622.1"/>
    <property type="molecule type" value="Genomic_DNA"/>
</dbReference>
<dbReference type="RefSeq" id="NP_796738.1">
    <property type="nucleotide sequence ID" value="NC_004603.1"/>
</dbReference>
<dbReference type="RefSeq" id="WP_005453795.1">
    <property type="nucleotide sequence ID" value="NC_004603.1"/>
</dbReference>
<dbReference type="SMR" id="Q87SR3"/>
<dbReference type="GeneID" id="1187826"/>
<dbReference type="KEGG" id="vpa:VP0359"/>
<dbReference type="PATRIC" id="fig|223926.6.peg.345"/>
<dbReference type="eggNOG" id="COG0449">
    <property type="taxonomic scope" value="Bacteria"/>
</dbReference>
<dbReference type="HOGENOM" id="CLU_012520_5_2_6"/>
<dbReference type="Proteomes" id="UP000002493">
    <property type="component" value="Chromosome 1"/>
</dbReference>
<dbReference type="GO" id="GO:0005829">
    <property type="term" value="C:cytosol"/>
    <property type="evidence" value="ECO:0007669"/>
    <property type="project" value="TreeGrafter"/>
</dbReference>
<dbReference type="GO" id="GO:0097367">
    <property type="term" value="F:carbohydrate derivative binding"/>
    <property type="evidence" value="ECO:0007669"/>
    <property type="project" value="InterPro"/>
</dbReference>
<dbReference type="GO" id="GO:0004360">
    <property type="term" value="F:glutamine-fructose-6-phosphate transaminase (isomerizing) activity"/>
    <property type="evidence" value="ECO:0007669"/>
    <property type="project" value="UniProtKB-UniRule"/>
</dbReference>
<dbReference type="GO" id="GO:0005975">
    <property type="term" value="P:carbohydrate metabolic process"/>
    <property type="evidence" value="ECO:0007669"/>
    <property type="project" value="UniProtKB-UniRule"/>
</dbReference>
<dbReference type="GO" id="GO:0006002">
    <property type="term" value="P:fructose 6-phosphate metabolic process"/>
    <property type="evidence" value="ECO:0007669"/>
    <property type="project" value="TreeGrafter"/>
</dbReference>
<dbReference type="GO" id="GO:0006487">
    <property type="term" value="P:protein N-linked glycosylation"/>
    <property type="evidence" value="ECO:0007669"/>
    <property type="project" value="TreeGrafter"/>
</dbReference>
<dbReference type="GO" id="GO:0006047">
    <property type="term" value="P:UDP-N-acetylglucosamine metabolic process"/>
    <property type="evidence" value="ECO:0007669"/>
    <property type="project" value="TreeGrafter"/>
</dbReference>
<dbReference type="CDD" id="cd00714">
    <property type="entry name" value="GFAT"/>
    <property type="match status" value="1"/>
</dbReference>
<dbReference type="CDD" id="cd05008">
    <property type="entry name" value="SIS_GlmS_GlmD_1"/>
    <property type="match status" value="1"/>
</dbReference>
<dbReference type="CDD" id="cd05009">
    <property type="entry name" value="SIS_GlmS_GlmD_2"/>
    <property type="match status" value="1"/>
</dbReference>
<dbReference type="FunFam" id="3.40.50.10490:FF:000001">
    <property type="entry name" value="Glutamine--fructose-6-phosphate aminotransferase [isomerizing]"/>
    <property type="match status" value="1"/>
</dbReference>
<dbReference type="FunFam" id="3.40.50.10490:FF:000002">
    <property type="entry name" value="Glutamine--fructose-6-phosphate aminotransferase [isomerizing]"/>
    <property type="match status" value="1"/>
</dbReference>
<dbReference type="FunFam" id="3.60.20.10:FF:000006">
    <property type="entry name" value="Glutamine--fructose-6-phosphate aminotransferase [isomerizing]"/>
    <property type="match status" value="1"/>
</dbReference>
<dbReference type="Gene3D" id="3.40.50.10490">
    <property type="entry name" value="Glucose-6-phosphate isomerase like protein, domain 1"/>
    <property type="match status" value="2"/>
</dbReference>
<dbReference type="Gene3D" id="3.60.20.10">
    <property type="entry name" value="Glutamine Phosphoribosylpyrophosphate, subunit 1, domain 1"/>
    <property type="match status" value="1"/>
</dbReference>
<dbReference type="HAMAP" id="MF_00164">
    <property type="entry name" value="GlmS"/>
    <property type="match status" value="1"/>
</dbReference>
<dbReference type="InterPro" id="IPR017932">
    <property type="entry name" value="GATase_2_dom"/>
</dbReference>
<dbReference type="InterPro" id="IPR005855">
    <property type="entry name" value="GFAT"/>
</dbReference>
<dbReference type="InterPro" id="IPR047084">
    <property type="entry name" value="GFAT_N"/>
</dbReference>
<dbReference type="InterPro" id="IPR035466">
    <property type="entry name" value="GlmS/AgaS_SIS"/>
</dbReference>
<dbReference type="InterPro" id="IPR035490">
    <property type="entry name" value="GlmS/FrlB_SIS"/>
</dbReference>
<dbReference type="InterPro" id="IPR029055">
    <property type="entry name" value="Ntn_hydrolases_N"/>
</dbReference>
<dbReference type="InterPro" id="IPR001347">
    <property type="entry name" value="SIS_dom"/>
</dbReference>
<dbReference type="InterPro" id="IPR046348">
    <property type="entry name" value="SIS_dom_sf"/>
</dbReference>
<dbReference type="NCBIfam" id="TIGR01135">
    <property type="entry name" value="glmS"/>
    <property type="match status" value="1"/>
</dbReference>
<dbReference type="NCBIfam" id="NF001484">
    <property type="entry name" value="PRK00331.1"/>
    <property type="match status" value="1"/>
</dbReference>
<dbReference type="PANTHER" id="PTHR10937">
    <property type="entry name" value="GLUCOSAMINE--FRUCTOSE-6-PHOSPHATE AMINOTRANSFERASE, ISOMERIZING"/>
    <property type="match status" value="1"/>
</dbReference>
<dbReference type="PANTHER" id="PTHR10937:SF0">
    <property type="entry name" value="GLUTAMINE--FRUCTOSE-6-PHOSPHATE TRANSAMINASE (ISOMERIZING)"/>
    <property type="match status" value="1"/>
</dbReference>
<dbReference type="Pfam" id="PF13522">
    <property type="entry name" value="GATase_6"/>
    <property type="match status" value="1"/>
</dbReference>
<dbReference type="Pfam" id="PF01380">
    <property type="entry name" value="SIS"/>
    <property type="match status" value="2"/>
</dbReference>
<dbReference type="SUPFAM" id="SSF56235">
    <property type="entry name" value="N-terminal nucleophile aminohydrolases (Ntn hydrolases)"/>
    <property type="match status" value="1"/>
</dbReference>
<dbReference type="SUPFAM" id="SSF53697">
    <property type="entry name" value="SIS domain"/>
    <property type="match status" value="1"/>
</dbReference>
<dbReference type="PROSITE" id="PS51278">
    <property type="entry name" value="GATASE_TYPE_2"/>
    <property type="match status" value="1"/>
</dbReference>
<dbReference type="PROSITE" id="PS51464">
    <property type="entry name" value="SIS"/>
    <property type="match status" value="2"/>
</dbReference>
<proteinExistence type="inferred from homology"/>
<reference key="1">
    <citation type="journal article" date="2003" name="Lancet">
        <title>Genome sequence of Vibrio parahaemolyticus: a pathogenic mechanism distinct from that of V. cholerae.</title>
        <authorList>
            <person name="Makino K."/>
            <person name="Oshima K."/>
            <person name="Kurokawa K."/>
            <person name="Yokoyama K."/>
            <person name="Uda T."/>
            <person name="Tagomori K."/>
            <person name="Iijima Y."/>
            <person name="Najima M."/>
            <person name="Nakano M."/>
            <person name="Yamashita A."/>
            <person name="Kubota Y."/>
            <person name="Kimura S."/>
            <person name="Yasunaga T."/>
            <person name="Honda T."/>
            <person name="Shinagawa H."/>
            <person name="Hattori M."/>
            <person name="Iida T."/>
        </authorList>
    </citation>
    <scope>NUCLEOTIDE SEQUENCE [LARGE SCALE GENOMIC DNA]</scope>
    <source>
        <strain>RIMD 2210633</strain>
    </source>
</reference>
<feature type="initiator methionine" description="Removed" evidence="1">
    <location>
        <position position="1"/>
    </location>
</feature>
<feature type="chain" id="PRO_0000135410" description="Glutamine--fructose-6-phosphate aminotransferase [isomerizing]">
    <location>
        <begin position="2"/>
        <end position="610"/>
    </location>
</feature>
<feature type="domain" description="Glutamine amidotransferase type-2" evidence="1">
    <location>
        <begin position="2"/>
        <end position="218"/>
    </location>
</feature>
<feature type="domain" description="SIS 1" evidence="1">
    <location>
        <begin position="286"/>
        <end position="426"/>
    </location>
</feature>
<feature type="domain" description="SIS 2" evidence="1">
    <location>
        <begin position="459"/>
        <end position="600"/>
    </location>
</feature>
<feature type="active site" description="Nucleophile; for GATase activity" evidence="1">
    <location>
        <position position="2"/>
    </location>
</feature>
<feature type="active site" description="For Fru-6P isomerization activity" evidence="1">
    <location>
        <position position="605"/>
    </location>
</feature>
<gene>
    <name evidence="1" type="primary">glmS</name>
    <name type="ordered locus">VP0359</name>
</gene>
<protein>
    <recommendedName>
        <fullName evidence="1">Glutamine--fructose-6-phosphate aminotransferase [isomerizing]</fullName>
        <ecNumber evidence="1">2.6.1.16</ecNumber>
    </recommendedName>
    <alternativeName>
        <fullName evidence="1">D-fructose-6-phosphate amidotransferase</fullName>
    </alternativeName>
    <alternativeName>
        <fullName evidence="1">GFAT</fullName>
    </alternativeName>
    <alternativeName>
        <fullName evidence="1">Glucosamine-6-phosphate synthase</fullName>
    </alternativeName>
    <alternativeName>
        <fullName evidence="1">Hexosephosphate aminotransferase</fullName>
    </alternativeName>
    <alternativeName>
        <fullName evidence="1">L-glutamine--D-fructose-6-phosphate amidotransferase</fullName>
    </alternativeName>
</protein>
<comment type="function">
    <text evidence="1">Catalyzes the first step in hexosamine metabolism, converting fructose-6P into glucosamine-6P using glutamine as a nitrogen source.</text>
</comment>
<comment type="catalytic activity">
    <reaction evidence="1">
        <text>D-fructose 6-phosphate + L-glutamine = D-glucosamine 6-phosphate + L-glutamate</text>
        <dbReference type="Rhea" id="RHEA:13237"/>
        <dbReference type="ChEBI" id="CHEBI:29985"/>
        <dbReference type="ChEBI" id="CHEBI:58359"/>
        <dbReference type="ChEBI" id="CHEBI:58725"/>
        <dbReference type="ChEBI" id="CHEBI:61527"/>
        <dbReference type="EC" id="2.6.1.16"/>
    </reaction>
</comment>
<comment type="subunit">
    <text evidence="1">Homodimer.</text>
</comment>
<comment type="subcellular location">
    <subcellularLocation>
        <location evidence="1">Cytoplasm</location>
    </subcellularLocation>
</comment>
<organism>
    <name type="scientific">Vibrio parahaemolyticus serotype O3:K6 (strain RIMD 2210633)</name>
    <dbReference type="NCBI Taxonomy" id="223926"/>
    <lineage>
        <taxon>Bacteria</taxon>
        <taxon>Pseudomonadati</taxon>
        <taxon>Pseudomonadota</taxon>
        <taxon>Gammaproteobacteria</taxon>
        <taxon>Vibrionales</taxon>
        <taxon>Vibrionaceae</taxon>
        <taxon>Vibrio</taxon>
    </lineage>
</organism>